<evidence type="ECO:0000255" key="1">
    <source>
        <dbReference type="HAMAP-Rule" id="MF_01660"/>
    </source>
</evidence>
<proteinExistence type="inferred from homology"/>
<reference key="1">
    <citation type="journal article" date="2011" name="J. Bacteriol.">
        <title>Comparative genomics of 28 Salmonella enterica isolates: evidence for CRISPR-mediated adaptive sublineage evolution.</title>
        <authorList>
            <person name="Fricke W.F."/>
            <person name="Mammel M.K."/>
            <person name="McDermott P.F."/>
            <person name="Tartera C."/>
            <person name="White D.G."/>
            <person name="Leclerc J.E."/>
            <person name="Ravel J."/>
            <person name="Cebula T.A."/>
        </authorList>
    </citation>
    <scope>NUCLEOTIDE SEQUENCE [LARGE SCALE GENOMIC DNA]</scope>
    <source>
        <strain>SL483</strain>
    </source>
</reference>
<organism>
    <name type="scientific">Salmonella agona (strain SL483)</name>
    <dbReference type="NCBI Taxonomy" id="454166"/>
    <lineage>
        <taxon>Bacteria</taxon>
        <taxon>Pseudomonadati</taxon>
        <taxon>Pseudomonadota</taxon>
        <taxon>Gammaproteobacteria</taxon>
        <taxon>Enterobacterales</taxon>
        <taxon>Enterobacteriaceae</taxon>
        <taxon>Salmonella</taxon>
    </lineage>
</organism>
<feature type="chain" id="PRO_1000187114" description="2-succinyl-6-hydroxy-2,4-cyclohexadiene-1-carboxylate synthase">
    <location>
        <begin position="1"/>
        <end position="252"/>
    </location>
</feature>
<protein>
    <recommendedName>
        <fullName evidence="1">2-succinyl-6-hydroxy-2,4-cyclohexadiene-1-carboxylate synthase</fullName>
        <shortName evidence="1">SHCHC synthase</shortName>
        <ecNumber evidence="1">4.2.99.20</ecNumber>
    </recommendedName>
</protein>
<gene>
    <name evidence="1" type="primary">menH</name>
    <name type="ordered locus">SeAg_B2444</name>
</gene>
<comment type="function">
    <text evidence="1">Catalyzes a proton abstraction reaction that results in 2,5-elimination of pyruvate from 2-succinyl-5-enolpyruvyl-6-hydroxy-3-cyclohexene-1-carboxylate (SEPHCHC) and the formation of 2-succinyl-6-hydroxy-2,4-cyclohexadiene-1-carboxylate (SHCHC).</text>
</comment>
<comment type="catalytic activity">
    <reaction evidence="1">
        <text>5-enolpyruvoyl-6-hydroxy-2-succinyl-cyclohex-3-ene-1-carboxylate = (1R,6R)-6-hydroxy-2-succinyl-cyclohexa-2,4-diene-1-carboxylate + pyruvate</text>
        <dbReference type="Rhea" id="RHEA:25597"/>
        <dbReference type="ChEBI" id="CHEBI:15361"/>
        <dbReference type="ChEBI" id="CHEBI:58689"/>
        <dbReference type="ChEBI" id="CHEBI:58818"/>
        <dbReference type="EC" id="4.2.99.20"/>
    </reaction>
</comment>
<comment type="pathway">
    <text evidence="1">Quinol/quinone metabolism; 1,4-dihydroxy-2-naphthoate biosynthesis; 1,4-dihydroxy-2-naphthoate from chorismate: step 3/7.</text>
</comment>
<comment type="pathway">
    <text evidence="1">Quinol/quinone metabolism; menaquinone biosynthesis.</text>
</comment>
<comment type="subunit">
    <text evidence="1">Monomer.</text>
</comment>
<comment type="similarity">
    <text evidence="1">Belongs to the AB hydrolase superfamily. MenH family.</text>
</comment>
<dbReference type="EC" id="4.2.99.20" evidence="1"/>
<dbReference type="EMBL" id="CP001138">
    <property type="protein sequence ID" value="ACH50514.1"/>
    <property type="molecule type" value="Genomic_DNA"/>
</dbReference>
<dbReference type="RefSeq" id="WP_000979145.1">
    <property type="nucleotide sequence ID" value="NC_011149.1"/>
</dbReference>
<dbReference type="SMR" id="B5EZI7"/>
<dbReference type="ESTHER" id="salty-YFBB">
    <property type="family name" value="MenH_SHCHC"/>
</dbReference>
<dbReference type="KEGG" id="sea:SeAg_B2444"/>
<dbReference type="HOGENOM" id="CLU_020336_38_2_6"/>
<dbReference type="UniPathway" id="UPA00079"/>
<dbReference type="UniPathway" id="UPA01057">
    <property type="reaction ID" value="UER00900"/>
</dbReference>
<dbReference type="Proteomes" id="UP000008819">
    <property type="component" value="Chromosome"/>
</dbReference>
<dbReference type="GO" id="GO:0070205">
    <property type="term" value="F:2-succinyl-6-hydroxy-2,4-cyclohexadiene-1-carboxylate synthase activity"/>
    <property type="evidence" value="ECO:0007669"/>
    <property type="project" value="UniProtKB-UniRule"/>
</dbReference>
<dbReference type="GO" id="GO:0009234">
    <property type="term" value="P:menaquinone biosynthetic process"/>
    <property type="evidence" value="ECO:0007669"/>
    <property type="project" value="UniProtKB-UniRule"/>
</dbReference>
<dbReference type="Gene3D" id="3.40.50.1820">
    <property type="entry name" value="alpha/beta hydrolase"/>
    <property type="match status" value="1"/>
</dbReference>
<dbReference type="HAMAP" id="MF_01660">
    <property type="entry name" value="MenH"/>
    <property type="match status" value="1"/>
</dbReference>
<dbReference type="InterPro" id="IPR000073">
    <property type="entry name" value="AB_hydrolase_1"/>
</dbReference>
<dbReference type="InterPro" id="IPR029058">
    <property type="entry name" value="AB_hydrolase_fold"/>
</dbReference>
<dbReference type="InterPro" id="IPR022485">
    <property type="entry name" value="SHCHC_synthase_MenH"/>
</dbReference>
<dbReference type="NCBIfam" id="TIGR03695">
    <property type="entry name" value="menH_SHCHC"/>
    <property type="match status" value="1"/>
</dbReference>
<dbReference type="NCBIfam" id="NF008340">
    <property type="entry name" value="PRK11126.1"/>
    <property type="match status" value="1"/>
</dbReference>
<dbReference type="PANTHER" id="PTHR42916">
    <property type="entry name" value="2-SUCCINYL-5-ENOLPYRUVYL-6-HYDROXY-3-CYCLOHEXENE-1-CARBOXYLATE SYNTHASE"/>
    <property type="match status" value="1"/>
</dbReference>
<dbReference type="PANTHER" id="PTHR42916:SF1">
    <property type="entry name" value="PROTEIN PHYLLO, CHLOROPLASTIC"/>
    <property type="match status" value="1"/>
</dbReference>
<dbReference type="Pfam" id="PF12697">
    <property type="entry name" value="Abhydrolase_6"/>
    <property type="match status" value="1"/>
</dbReference>
<dbReference type="SUPFAM" id="SSF53474">
    <property type="entry name" value="alpha/beta-Hydrolases"/>
    <property type="match status" value="1"/>
</dbReference>
<accession>B5EZI7</accession>
<name>MENH_SALA4</name>
<sequence>MMLHAQHMPGQPGAPSLVFLHGFSGDCREWQSVGEQFHGCSRLYIDLPGHGGSTAIPVGGFADVIRLLRATLISYNILKFWLVGYSLGGRVAMMAACQGIPGLCGLVVEGGHPGLQNEQARAERRLSDGRWAERFRREPLTEVFHDWYQQPVFASLTAQQRQALTALRSQNNGETLAAMLEATSLAAQPDLREALNALAFPFYYLCGERDSKFRALAQEVAATCHVIRNAGHNAHRENPAGVVDSLAQILRL</sequence>
<keyword id="KW-0456">Lyase</keyword>
<keyword id="KW-0474">Menaquinone biosynthesis</keyword>